<accession>A2C8K0</accession>
<reference key="1">
    <citation type="journal article" date="2007" name="PLoS Genet.">
        <title>Patterns and implications of gene gain and loss in the evolution of Prochlorococcus.</title>
        <authorList>
            <person name="Kettler G.C."/>
            <person name="Martiny A.C."/>
            <person name="Huang K."/>
            <person name="Zucker J."/>
            <person name="Coleman M.L."/>
            <person name="Rodrigue S."/>
            <person name="Chen F."/>
            <person name="Lapidus A."/>
            <person name="Ferriera S."/>
            <person name="Johnson J."/>
            <person name="Steglich C."/>
            <person name="Church G.M."/>
            <person name="Richardson P."/>
            <person name="Chisholm S.W."/>
        </authorList>
    </citation>
    <scope>NUCLEOTIDE SEQUENCE [LARGE SCALE GENOMIC DNA]</scope>
    <source>
        <strain>MIT 9303</strain>
    </source>
</reference>
<evidence type="ECO:0000255" key="1">
    <source>
        <dbReference type="HAMAP-Rule" id="MF_00358"/>
    </source>
</evidence>
<evidence type="ECO:0000256" key="2">
    <source>
        <dbReference type="SAM" id="MobiDB-lite"/>
    </source>
</evidence>
<evidence type="ECO:0000305" key="3"/>
<gene>
    <name evidence="1" type="primary">rpsU</name>
    <name evidence="1" type="synonym">rps21</name>
    <name type="ordered locus">P9303_10611</name>
</gene>
<comment type="similarity">
    <text evidence="1">Belongs to the bacterial ribosomal protein bS21 family.</text>
</comment>
<dbReference type="EMBL" id="CP000554">
    <property type="protein sequence ID" value="ABM77810.1"/>
    <property type="molecule type" value="Genomic_DNA"/>
</dbReference>
<dbReference type="RefSeq" id="WP_011130394.1">
    <property type="nucleotide sequence ID" value="NC_008820.1"/>
</dbReference>
<dbReference type="SMR" id="A2C8K0"/>
<dbReference type="STRING" id="59922.P9303_10611"/>
<dbReference type="KEGG" id="pmf:P9303_10611"/>
<dbReference type="HOGENOM" id="CLU_159258_3_1_3"/>
<dbReference type="BioCyc" id="PMAR59922:G1G80-948-MONOMER"/>
<dbReference type="Proteomes" id="UP000002274">
    <property type="component" value="Chromosome"/>
</dbReference>
<dbReference type="GO" id="GO:1990904">
    <property type="term" value="C:ribonucleoprotein complex"/>
    <property type="evidence" value="ECO:0007669"/>
    <property type="project" value="UniProtKB-KW"/>
</dbReference>
<dbReference type="GO" id="GO:0005840">
    <property type="term" value="C:ribosome"/>
    <property type="evidence" value="ECO:0007669"/>
    <property type="project" value="UniProtKB-KW"/>
</dbReference>
<dbReference type="GO" id="GO:0003735">
    <property type="term" value="F:structural constituent of ribosome"/>
    <property type="evidence" value="ECO:0007669"/>
    <property type="project" value="InterPro"/>
</dbReference>
<dbReference type="GO" id="GO:0006412">
    <property type="term" value="P:translation"/>
    <property type="evidence" value="ECO:0007669"/>
    <property type="project" value="UniProtKB-UniRule"/>
</dbReference>
<dbReference type="Gene3D" id="1.20.5.1150">
    <property type="entry name" value="Ribosomal protein S8"/>
    <property type="match status" value="1"/>
</dbReference>
<dbReference type="HAMAP" id="MF_00358">
    <property type="entry name" value="Ribosomal_bS21"/>
    <property type="match status" value="1"/>
</dbReference>
<dbReference type="InterPro" id="IPR001911">
    <property type="entry name" value="Ribosomal_bS21"/>
</dbReference>
<dbReference type="InterPro" id="IPR018278">
    <property type="entry name" value="Ribosomal_bS21_CS"/>
</dbReference>
<dbReference type="InterPro" id="IPR038380">
    <property type="entry name" value="Ribosomal_bS21_sf"/>
</dbReference>
<dbReference type="NCBIfam" id="TIGR00030">
    <property type="entry name" value="S21p"/>
    <property type="match status" value="1"/>
</dbReference>
<dbReference type="PANTHER" id="PTHR21109">
    <property type="entry name" value="MITOCHONDRIAL 28S RIBOSOMAL PROTEIN S21"/>
    <property type="match status" value="1"/>
</dbReference>
<dbReference type="PANTHER" id="PTHR21109:SF0">
    <property type="entry name" value="SMALL RIBOSOMAL SUBUNIT PROTEIN BS21M"/>
    <property type="match status" value="1"/>
</dbReference>
<dbReference type="Pfam" id="PF01165">
    <property type="entry name" value="Ribosomal_S21"/>
    <property type="match status" value="1"/>
</dbReference>
<dbReference type="PRINTS" id="PR00976">
    <property type="entry name" value="RIBOSOMALS21"/>
</dbReference>
<dbReference type="PROSITE" id="PS01181">
    <property type="entry name" value="RIBOSOMAL_S21"/>
    <property type="match status" value="1"/>
</dbReference>
<sequence length="58" mass="6906">MAQVTVGENEGVESALRRFKRAVSKAGIFSDLKRIRHHETPVEKYKRKAQQRRRSRRR</sequence>
<organism>
    <name type="scientific">Prochlorococcus marinus (strain MIT 9303)</name>
    <dbReference type="NCBI Taxonomy" id="59922"/>
    <lineage>
        <taxon>Bacteria</taxon>
        <taxon>Bacillati</taxon>
        <taxon>Cyanobacteriota</taxon>
        <taxon>Cyanophyceae</taxon>
        <taxon>Synechococcales</taxon>
        <taxon>Prochlorococcaceae</taxon>
        <taxon>Prochlorococcus</taxon>
    </lineage>
</organism>
<protein>
    <recommendedName>
        <fullName evidence="1">Small ribosomal subunit protein bS21</fullName>
    </recommendedName>
    <alternativeName>
        <fullName evidence="3">30S ribosomal protein S21</fullName>
    </alternativeName>
</protein>
<keyword id="KW-0687">Ribonucleoprotein</keyword>
<keyword id="KW-0689">Ribosomal protein</keyword>
<proteinExistence type="inferred from homology"/>
<feature type="chain" id="PRO_1000005151" description="Small ribosomal subunit protein bS21">
    <location>
        <begin position="1"/>
        <end position="58"/>
    </location>
</feature>
<feature type="region of interest" description="Disordered" evidence="2">
    <location>
        <begin position="31"/>
        <end position="58"/>
    </location>
</feature>
<feature type="compositionally biased region" description="Basic residues" evidence="2">
    <location>
        <begin position="45"/>
        <end position="58"/>
    </location>
</feature>
<name>RS21_PROM3</name>